<gene>
    <name type="primary">pfo</name>
    <name type="synonym">pfoA</name>
    <name type="synonym">pfoR</name>
    <name type="ordered locus">CPF_0156</name>
</gene>
<accession>Q0TUS0</accession>
<accession>P19995</accession>
<name>TACY_CLOP1</name>
<reference key="1">
    <citation type="journal article" date="1988" name="Infect. Immun.">
        <title>Nucleotide sequence of the gene for perfringolysin O (theta-toxin) from Clostridium perfringens: significant homology with the genes for streptolysin O and pneumolysin.</title>
        <authorList>
            <person name="Tweten R.K."/>
        </authorList>
    </citation>
    <scope>NUCLEOTIDE SEQUENCE [GENOMIC DNA]</scope>
    <scope>PROTEIN SEQUENCE OF 29-44</scope>
</reference>
<reference key="2">
    <citation type="journal article" date="2006" name="Genome Res.">
        <title>Skewed genomic variability in strains of the toxigenic bacterial pathogen, Clostridium perfringens.</title>
        <authorList>
            <person name="Myers G.S.A."/>
            <person name="Rasko D.A."/>
            <person name="Cheung J.K."/>
            <person name="Ravel J."/>
            <person name="Seshadri R."/>
            <person name="DeBoy R.T."/>
            <person name="Ren Q."/>
            <person name="Varga J."/>
            <person name="Awad M.M."/>
            <person name="Brinkac L.M."/>
            <person name="Daugherty S.C."/>
            <person name="Haft D.H."/>
            <person name="Dodson R.J."/>
            <person name="Madupu R."/>
            <person name="Nelson W.C."/>
            <person name="Rosovitz M.J."/>
            <person name="Sullivan S.A."/>
            <person name="Khouri H."/>
            <person name="Dimitrov G.I."/>
            <person name="Watkins K.L."/>
            <person name="Mulligan S."/>
            <person name="Benton J."/>
            <person name="Radune D."/>
            <person name="Fisher D.J."/>
            <person name="Atkins H.S."/>
            <person name="Hiscox T."/>
            <person name="Jost B.H."/>
            <person name="Billington S.J."/>
            <person name="Songer J.G."/>
            <person name="McClane B.A."/>
            <person name="Titball R.W."/>
            <person name="Rood J.I."/>
            <person name="Melville S.B."/>
            <person name="Paulsen I.T."/>
        </authorList>
    </citation>
    <scope>NUCLEOTIDE SEQUENCE [LARGE SCALE GENOMIC DNA]</scope>
    <source>
        <strain>ATCC 13124 / DSM 756 / JCM 1290 / NCIMB 6125 / NCTC 8237 / S 107 / Type A</strain>
    </source>
</reference>
<reference key="3">
    <citation type="journal article" date="1995" name="Microbiol. Immunol.">
        <title>Sequence analysis of flanking regions of the pfoA gene of Clostridium perfringens: beta-galactosidase gene (pbg) is located in the 3'-flanking region.</title>
        <authorList>
            <person name="Shimizu T."/>
            <person name="Kobayashi T."/>
            <person name="Ba-Thein W."/>
            <person name="Ohtani K."/>
            <person name="Hayashi H."/>
        </authorList>
    </citation>
    <scope>NUCLEOTIDE SEQUENCE [GENOMIC DNA] OF 492-500</scope>
</reference>
<dbReference type="EMBL" id="M36704">
    <property type="protein sequence ID" value="AAA23270.1"/>
    <property type="molecule type" value="Genomic_DNA"/>
</dbReference>
<dbReference type="EMBL" id="CP000246">
    <property type="protein sequence ID" value="ABG82518.1"/>
    <property type="molecule type" value="Genomic_DNA"/>
</dbReference>
<dbReference type="EMBL" id="D49537">
    <property type="protein sequence ID" value="BAA08481.1"/>
    <property type="molecule type" value="Genomic_DNA"/>
</dbReference>
<dbReference type="PIR" id="B43577">
    <property type="entry name" value="B43577"/>
</dbReference>
<dbReference type="RefSeq" id="WP_003462918.1">
    <property type="nucleotide sequence ID" value="NC_008261.1"/>
</dbReference>
<dbReference type="SMR" id="Q0TUS0"/>
<dbReference type="STRING" id="195103.CPF_0156"/>
<dbReference type="PaxDb" id="195103-CPF_0156"/>
<dbReference type="KEGG" id="cpf:CPF_0156"/>
<dbReference type="eggNOG" id="ENOG502Z7ST">
    <property type="taxonomic scope" value="Bacteria"/>
</dbReference>
<dbReference type="HOGENOM" id="CLU_026912_1_0_9"/>
<dbReference type="Proteomes" id="UP000001823">
    <property type="component" value="Chromosome"/>
</dbReference>
<dbReference type="GO" id="GO:0005576">
    <property type="term" value="C:extracellular region"/>
    <property type="evidence" value="ECO:0007669"/>
    <property type="project" value="UniProtKB-SubCell"/>
</dbReference>
<dbReference type="GO" id="GO:0020002">
    <property type="term" value="C:host cell plasma membrane"/>
    <property type="evidence" value="ECO:0007669"/>
    <property type="project" value="UniProtKB-SubCell"/>
</dbReference>
<dbReference type="GO" id="GO:0016020">
    <property type="term" value="C:membrane"/>
    <property type="evidence" value="ECO:0007669"/>
    <property type="project" value="UniProtKB-KW"/>
</dbReference>
<dbReference type="GO" id="GO:0015485">
    <property type="term" value="F:cholesterol binding"/>
    <property type="evidence" value="ECO:0007669"/>
    <property type="project" value="InterPro"/>
</dbReference>
<dbReference type="GO" id="GO:0090729">
    <property type="term" value="F:toxin activity"/>
    <property type="evidence" value="ECO:0007669"/>
    <property type="project" value="UniProtKB-KW"/>
</dbReference>
<dbReference type="GO" id="GO:0031640">
    <property type="term" value="P:killing of cells of another organism"/>
    <property type="evidence" value="ECO:0007669"/>
    <property type="project" value="UniProtKB-KW"/>
</dbReference>
<dbReference type="FunFam" id="2.60.40.1430:FF:000001">
    <property type="entry name" value="Thiol-activated cytolysin"/>
    <property type="match status" value="1"/>
</dbReference>
<dbReference type="Gene3D" id="3.30.1040.20">
    <property type="match status" value="1"/>
</dbReference>
<dbReference type="Gene3D" id="3.40.30.40">
    <property type="entry name" value="Perfringolysin"/>
    <property type="match status" value="1"/>
</dbReference>
<dbReference type="Gene3D" id="2.60.40.1430">
    <property type="entry name" value="Perfringolysin, domain 4"/>
    <property type="match status" value="1"/>
</dbReference>
<dbReference type="Gene3D" id="3.90.840.10">
    <property type="entry name" value="Thiol-activated cytolysin superfamily/Thiol-activated cytolysin, alpha-beta domain"/>
    <property type="match status" value="1"/>
</dbReference>
<dbReference type="InterPro" id="IPR035390">
    <property type="entry name" value="Thiol_cytolys_C"/>
</dbReference>
<dbReference type="InterPro" id="IPR038700">
    <property type="entry name" value="Thiol_cytolys_C_sf"/>
</dbReference>
<dbReference type="InterPro" id="IPR001869">
    <property type="entry name" value="Thiol_cytolysin"/>
</dbReference>
<dbReference type="InterPro" id="IPR036363">
    <property type="entry name" value="Thiol_cytolysin_ab_sf"/>
</dbReference>
<dbReference type="InterPro" id="IPR036359">
    <property type="entry name" value="Thiol_cytolysin_sf"/>
</dbReference>
<dbReference type="Pfam" id="PF17440">
    <property type="entry name" value="Thiol_cytolys_C"/>
    <property type="match status" value="1"/>
</dbReference>
<dbReference type="Pfam" id="PF01289">
    <property type="entry name" value="Thiol_cytolysin"/>
    <property type="match status" value="1"/>
</dbReference>
<dbReference type="PRINTS" id="PR01400">
    <property type="entry name" value="TACYTOLYSIN"/>
</dbReference>
<dbReference type="SUPFAM" id="SSF56978">
    <property type="entry name" value="Perfringolysin"/>
    <property type="match status" value="1"/>
</dbReference>
<dbReference type="PROSITE" id="PS00481">
    <property type="entry name" value="THIOL_CYTOLYSINS"/>
    <property type="match status" value="1"/>
</dbReference>
<feature type="signal peptide" evidence="4">
    <location>
        <begin position="1"/>
        <end position="28"/>
    </location>
</feature>
<feature type="chain" id="PRO_0000273630" description="Perfringolysin O">
    <location>
        <begin position="29"/>
        <end position="500"/>
    </location>
</feature>
<feature type="transmembrane region" description="Beta stranded" evidence="3">
    <location>
        <begin position="189"/>
        <end position="202"/>
    </location>
</feature>
<feature type="transmembrane region" description="Beta stranded" evidence="3">
    <location>
        <begin position="209"/>
        <end position="218"/>
    </location>
</feature>
<feature type="transmembrane region" description="Beta stranded" evidence="3">
    <location>
        <begin position="287"/>
        <end position="296"/>
    </location>
</feature>
<feature type="transmembrane region" description="Beta stranded" evidence="3">
    <location>
        <begin position="304"/>
        <end position="316"/>
    </location>
</feature>
<feature type="short sequence motif" description="Conserved undecapeptide" evidence="5">
    <location>
        <begin position="458"/>
        <end position="468"/>
    </location>
</feature>
<feature type="short sequence motif" description="Cholesterol binding" evidence="1">
    <location>
        <begin position="490"/>
        <end position="491"/>
    </location>
</feature>
<feature type="sequence conflict" description="In Ref. 1; AAA23270." evidence="5" ref="1">
    <original>RKP</original>
    <variation>EA</variation>
    <location>
        <begin position="126"/>
        <end position="128"/>
    </location>
</feature>
<organism>
    <name type="scientific">Clostridium perfringens (strain ATCC 13124 / DSM 756 / JCM 1290 / NCIMB 6125 / NCTC 8237 / Type A)</name>
    <dbReference type="NCBI Taxonomy" id="195103"/>
    <lineage>
        <taxon>Bacteria</taxon>
        <taxon>Bacillati</taxon>
        <taxon>Bacillota</taxon>
        <taxon>Clostridia</taxon>
        <taxon>Eubacteriales</taxon>
        <taxon>Clostridiaceae</taxon>
        <taxon>Clostridium</taxon>
    </lineage>
</organism>
<sequence length="500" mass="55800">MIRFKKTKLIASIAMALCLFSQPVISFSKDITDKNQSIDSGISSLSYNRNEVLASNGDKIESFVPKEGKKAGNKFIVVERQKRSLTTSPVDISIIDSVNDRTYPGALQLADKAFVENRPTILMVKRKPININIDLPGLKGENSIKVDDPTYGKVSGAIDELVSKWNEKYSSTHTLPARTQYSESMVYSKSQISSALNVNAKVLENSLGVDFNAVANNEKKVMILAYKQIFYTVSADLPKNPSDLFDDSVTFNDLKQKGVSNEAPPLMVSNVAYGRTIYVKLETTSSSKDVQAAFKALIKNTDIKNSQQYKDIYENSSFTAVVLGGDAQEHNKVVTKDFDEIRKVIKDNATFSTKNPAYPISYTSVFLKDNSVAAVHNKTDYIETTSTEYSKGKINLDHSGAYVAQFEVAWDEVSYDKEGNEVLTHKTWDGNYQDKTAHYSTVIPLEANARNIRIKARECTGLAWEWWRDVISEYDVPLTNNINVSIWGTTLYPGSSITYN</sequence>
<proteinExistence type="evidence at protein level"/>
<keyword id="KW-0204">Cytolysis</keyword>
<keyword id="KW-0903">Direct protein sequencing</keyword>
<keyword id="KW-0354">Hemolysis</keyword>
<keyword id="KW-1032">Host cell membrane</keyword>
<keyword id="KW-1043">Host membrane</keyword>
<keyword id="KW-0446">Lipid-binding</keyword>
<keyword id="KW-0472">Membrane</keyword>
<keyword id="KW-0964">Secreted</keyword>
<keyword id="KW-0732">Signal</keyword>
<keyword id="KW-0800">Toxin</keyword>
<keyword id="KW-0812">Transmembrane</keyword>
<keyword id="KW-1134">Transmembrane beta strand</keyword>
<keyword id="KW-0843">Virulence</keyword>
<evidence type="ECO:0000250" key="1">
    <source>
        <dbReference type="UniProtKB" id="P0C2E9"/>
    </source>
</evidence>
<evidence type="ECO:0000250" key="2">
    <source>
        <dbReference type="UniProtKB" id="P13128"/>
    </source>
</evidence>
<evidence type="ECO:0000250" key="3">
    <source>
        <dbReference type="UniProtKB" id="Q04IN8"/>
    </source>
</evidence>
<evidence type="ECO:0000269" key="4">
    <source>
    </source>
</evidence>
<evidence type="ECO:0000305" key="5"/>
<protein>
    <recommendedName>
        <fullName>Perfringolysin O</fullName>
        <shortName>PFO</shortName>
    </recommendedName>
    <alternativeName>
        <fullName>Theta-toxin</fullName>
    </alternativeName>
    <alternativeName>
        <fullName>Thiol-activated cytolysin</fullName>
    </alternativeName>
</protein>
<comment type="function">
    <text evidence="1">A cholesterol-dependent toxin that causes cytolysis by forming pores in cholesterol containing host membranes. After binding to target membranes, the protein assembles into a pre-pore complex. A conformation change leads to insertion in the host membrane and formation of an oligomeric pore complex. Cholesterol is required for binding to host cell membranes, membrane insertion and pore formation; cholesterol binding is mediated by a Thr-Leu pair in the C-terminus. Can be reversibly inactivated by oxidation.</text>
</comment>
<comment type="subunit">
    <text evidence="3">Homooligomeric pore complex of 35 to 50 subunits; when inserted in the host membrane.</text>
</comment>
<comment type="subcellular location">
    <subcellularLocation>
        <location evidence="2">Secreted</location>
    </subcellularLocation>
    <subcellularLocation>
        <location evidence="2">Host cell membrane</location>
        <topology evidence="3">Multi-pass membrane protein</topology>
    </subcellularLocation>
    <text evidence="3">Secreted as soluble protein that then inserts into the host cell membrane and forms huge pores formed by transmembrane beta-strands.</text>
</comment>
<comment type="similarity">
    <text evidence="5">Belongs to the cholesterol-dependent cytolysin family.</text>
</comment>